<evidence type="ECO:0000255" key="1">
    <source>
        <dbReference type="HAMAP-Rule" id="MF_00636"/>
    </source>
</evidence>
<evidence type="ECO:0000256" key="2">
    <source>
        <dbReference type="SAM" id="MobiDB-lite"/>
    </source>
</evidence>
<evidence type="ECO:0000305" key="3"/>
<dbReference type="EMBL" id="BA000035">
    <property type="protein sequence ID" value="BAC18520.1"/>
    <property type="molecule type" value="Genomic_DNA"/>
</dbReference>
<dbReference type="RefSeq" id="WP_011075572.1">
    <property type="nucleotide sequence ID" value="NC_004369.1"/>
</dbReference>
<dbReference type="SMR" id="Q8FT61"/>
<dbReference type="STRING" id="196164.gene:10742131"/>
<dbReference type="KEGG" id="cef:CE1710"/>
<dbReference type="eggNOG" id="COG1660">
    <property type="taxonomic scope" value="Bacteria"/>
</dbReference>
<dbReference type="HOGENOM" id="CLU_059558_0_0_11"/>
<dbReference type="OrthoDB" id="9784461at2"/>
<dbReference type="Proteomes" id="UP000001409">
    <property type="component" value="Chromosome"/>
</dbReference>
<dbReference type="GO" id="GO:0005524">
    <property type="term" value="F:ATP binding"/>
    <property type="evidence" value="ECO:0007669"/>
    <property type="project" value="UniProtKB-UniRule"/>
</dbReference>
<dbReference type="GO" id="GO:0005525">
    <property type="term" value="F:GTP binding"/>
    <property type="evidence" value="ECO:0007669"/>
    <property type="project" value="UniProtKB-UniRule"/>
</dbReference>
<dbReference type="Gene3D" id="3.40.50.300">
    <property type="entry name" value="P-loop containing nucleotide triphosphate hydrolases"/>
    <property type="match status" value="1"/>
</dbReference>
<dbReference type="HAMAP" id="MF_00636">
    <property type="entry name" value="RapZ_like"/>
    <property type="match status" value="1"/>
</dbReference>
<dbReference type="InterPro" id="IPR027417">
    <property type="entry name" value="P-loop_NTPase"/>
</dbReference>
<dbReference type="InterPro" id="IPR005337">
    <property type="entry name" value="RapZ-like"/>
</dbReference>
<dbReference type="InterPro" id="IPR053930">
    <property type="entry name" value="RapZ-like_N"/>
</dbReference>
<dbReference type="InterPro" id="IPR053931">
    <property type="entry name" value="RapZ_C"/>
</dbReference>
<dbReference type="NCBIfam" id="NF003828">
    <property type="entry name" value="PRK05416.1"/>
    <property type="match status" value="1"/>
</dbReference>
<dbReference type="PANTHER" id="PTHR30448">
    <property type="entry name" value="RNASE ADAPTER PROTEIN RAPZ"/>
    <property type="match status" value="1"/>
</dbReference>
<dbReference type="PANTHER" id="PTHR30448:SF0">
    <property type="entry name" value="RNASE ADAPTER PROTEIN RAPZ"/>
    <property type="match status" value="1"/>
</dbReference>
<dbReference type="Pfam" id="PF22740">
    <property type="entry name" value="PapZ_C"/>
    <property type="match status" value="1"/>
</dbReference>
<dbReference type="Pfam" id="PF03668">
    <property type="entry name" value="RapZ-like_N"/>
    <property type="match status" value="1"/>
</dbReference>
<dbReference type="PIRSF" id="PIRSF005052">
    <property type="entry name" value="P-loopkin"/>
    <property type="match status" value="1"/>
</dbReference>
<dbReference type="SUPFAM" id="SSF52540">
    <property type="entry name" value="P-loop containing nucleoside triphosphate hydrolases"/>
    <property type="match status" value="1"/>
</dbReference>
<sequence length="314" mass="34951">MNQTPGSTVPETATPVTSPASSPSAPETTFTPVIITGMSGAGLSTAARVLEDLGWFVTHNLPPQMILPLVEMCAREDSPVDKVAVVCDVRSREFRGGLRETITELEEKNLAPTVLFLDARDDELIRRFDNVRRTHPLQGSQTLQVGIERERQMLSDLKEEADVVIDTSELSVHDLRRAIESSFRTIAKRVQHVTIESFGFKHGSPRDADFIIDARFLPNPFWVPELRPFRGVDKPVSDYVLSQKGAGEFLDNFIAMLDDMLPGYRHEGKNFITVGIGCTGGHHRSVAVSEELARRLGERPDLDVSVVHRDINRN</sequence>
<name>Y1710_COREF</name>
<protein>
    <recommendedName>
        <fullName evidence="1">Nucleotide-binding protein CE1710</fullName>
    </recommendedName>
</protein>
<proteinExistence type="inferred from homology"/>
<keyword id="KW-0067">ATP-binding</keyword>
<keyword id="KW-0342">GTP-binding</keyword>
<keyword id="KW-0547">Nucleotide-binding</keyword>
<keyword id="KW-1185">Reference proteome</keyword>
<feature type="chain" id="PRO_0000107701" description="Nucleotide-binding protein CE1710">
    <location>
        <begin position="1"/>
        <end position="314"/>
    </location>
</feature>
<feature type="region of interest" description="Disordered" evidence="2">
    <location>
        <begin position="1"/>
        <end position="29"/>
    </location>
</feature>
<feature type="compositionally biased region" description="Low complexity" evidence="2">
    <location>
        <begin position="7"/>
        <end position="29"/>
    </location>
</feature>
<feature type="binding site" evidence="1">
    <location>
        <begin position="37"/>
        <end position="44"/>
    </location>
    <ligand>
        <name>ATP</name>
        <dbReference type="ChEBI" id="CHEBI:30616"/>
    </ligand>
</feature>
<feature type="binding site" evidence="1">
    <location>
        <begin position="88"/>
        <end position="91"/>
    </location>
    <ligand>
        <name>GTP</name>
        <dbReference type="ChEBI" id="CHEBI:37565"/>
    </ligand>
</feature>
<reference key="1">
    <citation type="journal article" date="2003" name="Genome Res.">
        <title>Comparative complete genome sequence analysis of the amino acid replacements responsible for the thermostability of Corynebacterium efficiens.</title>
        <authorList>
            <person name="Nishio Y."/>
            <person name="Nakamura Y."/>
            <person name="Kawarabayasi Y."/>
            <person name="Usuda Y."/>
            <person name="Kimura E."/>
            <person name="Sugimoto S."/>
            <person name="Matsui K."/>
            <person name="Yamagishi A."/>
            <person name="Kikuchi H."/>
            <person name="Ikeo K."/>
            <person name="Gojobori T."/>
        </authorList>
    </citation>
    <scope>NUCLEOTIDE SEQUENCE [LARGE SCALE GENOMIC DNA]</scope>
    <source>
        <strain>DSM 44549 / YS-314 / AJ 12310 / JCM 11189 / NBRC 100395</strain>
    </source>
</reference>
<organism>
    <name type="scientific">Corynebacterium efficiens (strain DSM 44549 / YS-314 / AJ 12310 / JCM 11189 / NBRC 100395)</name>
    <dbReference type="NCBI Taxonomy" id="196164"/>
    <lineage>
        <taxon>Bacteria</taxon>
        <taxon>Bacillati</taxon>
        <taxon>Actinomycetota</taxon>
        <taxon>Actinomycetes</taxon>
        <taxon>Mycobacteriales</taxon>
        <taxon>Corynebacteriaceae</taxon>
        <taxon>Corynebacterium</taxon>
    </lineage>
</organism>
<gene>
    <name type="ordered locus">CE1710</name>
</gene>
<accession>Q8FT61</accession>
<comment type="function">
    <text evidence="1">Displays ATPase and GTPase activities.</text>
</comment>
<comment type="similarity">
    <text evidence="1">Belongs to the RapZ-like family.</text>
</comment>
<comment type="caution">
    <text evidence="3">Lacks the conserved ATP-binding site due to Leu-43 (instead of a conserved basic residue).</text>
</comment>